<dbReference type="EC" id="4.1.1.39" evidence="2 4 5"/>
<dbReference type="EMBL" id="CP000109">
    <property type="protein sequence ID" value="ABB41434.1"/>
    <property type="molecule type" value="Genomic_DNA"/>
</dbReference>
<dbReference type="SMR" id="Q31HD9"/>
<dbReference type="STRING" id="317025.Tcr_0838"/>
<dbReference type="KEGG" id="tcx:Tcr_0838"/>
<dbReference type="eggNOG" id="COG1850">
    <property type="taxonomic scope" value="Bacteria"/>
</dbReference>
<dbReference type="HOGENOM" id="CLU_031450_2_0_6"/>
<dbReference type="OrthoDB" id="9770811at2"/>
<dbReference type="GO" id="GO:0031470">
    <property type="term" value="C:carboxysome"/>
    <property type="evidence" value="ECO:0007669"/>
    <property type="project" value="UniProtKB-SubCell"/>
</dbReference>
<dbReference type="GO" id="GO:0000287">
    <property type="term" value="F:magnesium ion binding"/>
    <property type="evidence" value="ECO:0007669"/>
    <property type="project" value="UniProtKB-UniRule"/>
</dbReference>
<dbReference type="GO" id="GO:0004497">
    <property type="term" value="F:monooxygenase activity"/>
    <property type="evidence" value="ECO:0007669"/>
    <property type="project" value="UniProtKB-KW"/>
</dbReference>
<dbReference type="GO" id="GO:0016984">
    <property type="term" value="F:ribulose-bisphosphate carboxylase activity"/>
    <property type="evidence" value="ECO:0007669"/>
    <property type="project" value="UniProtKB-UniRule"/>
</dbReference>
<dbReference type="GO" id="GO:0019253">
    <property type="term" value="P:reductive pentose-phosphate cycle"/>
    <property type="evidence" value="ECO:0007669"/>
    <property type="project" value="UniProtKB-UniRule"/>
</dbReference>
<dbReference type="Gene3D" id="3.20.20.110">
    <property type="entry name" value="Ribulose bisphosphate carboxylase, large subunit, C-terminal domain"/>
    <property type="match status" value="1"/>
</dbReference>
<dbReference type="Gene3D" id="3.30.70.150">
    <property type="entry name" value="RuBisCO large subunit, N-terminal domain"/>
    <property type="match status" value="1"/>
</dbReference>
<dbReference type="HAMAP" id="MF_01338">
    <property type="entry name" value="RuBisCO_L_type1"/>
    <property type="match status" value="1"/>
</dbReference>
<dbReference type="InterPro" id="IPR033966">
    <property type="entry name" value="RuBisCO"/>
</dbReference>
<dbReference type="InterPro" id="IPR000685">
    <property type="entry name" value="RuBisCO_lsu_C"/>
</dbReference>
<dbReference type="InterPro" id="IPR036376">
    <property type="entry name" value="RuBisCO_lsu_C_sf"/>
</dbReference>
<dbReference type="InterPro" id="IPR017443">
    <property type="entry name" value="RuBisCO_lsu_fd_N"/>
</dbReference>
<dbReference type="InterPro" id="IPR036422">
    <property type="entry name" value="RuBisCO_lsu_N_sf"/>
</dbReference>
<dbReference type="InterPro" id="IPR020888">
    <property type="entry name" value="RuBisCO_lsuI"/>
</dbReference>
<dbReference type="NCBIfam" id="NF003252">
    <property type="entry name" value="PRK04208.1"/>
    <property type="match status" value="1"/>
</dbReference>
<dbReference type="PANTHER" id="PTHR42704">
    <property type="entry name" value="RIBULOSE BISPHOSPHATE CARBOXYLASE"/>
    <property type="match status" value="1"/>
</dbReference>
<dbReference type="PANTHER" id="PTHR42704:SF17">
    <property type="entry name" value="RIBULOSE BISPHOSPHATE CARBOXYLASE LARGE CHAIN"/>
    <property type="match status" value="1"/>
</dbReference>
<dbReference type="Pfam" id="PF00016">
    <property type="entry name" value="RuBisCO_large"/>
    <property type="match status" value="1"/>
</dbReference>
<dbReference type="Pfam" id="PF02788">
    <property type="entry name" value="RuBisCO_large_N"/>
    <property type="match status" value="1"/>
</dbReference>
<dbReference type="SFLD" id="SFLDG01052">
    <property type="entry name" value="RuBisCO"/>
    <property type="match status" value="1"/>
</dbReference>
<dbReference type="SFLD" id="SFLDS00014">
    <property type="entry name" value="RuBisCO"/>
    <property type="match status" value="1"/>
</dbReference>
<dbReference type="SFLD" id="SFLDG00301">
    <property type="entry name" value="RuBisCO-like_proteins"/>
    <property type="match status" value="1"/>
</dbReference>
<dbReference type="SUPFAM" id="SSF51649">
    <property type="entry name" value="RuBisCo, C-terminal domain"/>
    <property type="match status" value="1"/>
</dbReference>
<dbReference type="SUPFAM" id="SSF54966">
    <property type="entry name" value="RuBisCO, large subunit, small (N-terminal) domain"/>
    <property type="match status" value="1"/>
</dbReference>
<protein>
    <recommendedName>
        <fullName evidence="2">Ribulose bisphosphate carboxylase large chain 2</fullName>
        <shortName evidence="2">RuBisCO large subunit 2</shortName>
        <ecNumber evidence="2 4 5">4.1.1.39</ecNumber>
    </recommendedName>
    <alternativeName>
        <fullName evidence="7">Carboxysomal form I RuBisCO large subunit</fullName>
    </alternativeName>
</protein>
<reference key="1">
    <citation type="journal article" date="2006" name="PLoS Biol.">
        <title>The genome of deep-sea vent chemolithoautotroph Thiomicrospira crunogena XCL-2.</title>
        <authorList>
            <person name="Scott K.M."/>
            <person name="Sievert S.M."/>
            <person name="Abril F.N."/>
            <person name="Ball L.A."/>
            <person name="Barrett C.J."/>
            <person name="Blake R.A."/>
            <person name="Boller A.J."/>
            <person name="Chain P.S.G."/>
            <person name="Clark J.A."/>
            <person name="Davis C.R."/>
            <person name="Detter C."/>
            <person name="Do K.F."/>
            <person name="Dobrinski K.P."/>
            <person name="Faza B.I."/>
            <person name="Fitzpatrick K.A."/>
            <person name="Freyermuth S.K."/>
            <person name="Harmer T.L."/>
            <person name="Hauser L.J."/>
            <person name="Huegler M."/>
            <person name="Kerfeld C.A."/>
            <person name="Klotz M.G."/>
            <person name="Kong W.W."/>
            <person name="Land M."/>
            <person name="Lapidus A."/>
            <person name="Larimer F.W."/>
            <person name="Longo D.L."/>
            <person name="Lucas S."/>
            <person name="Malfatti S.A."/>
            <person name="Massey S.E."/>
            <person name="Martin D.D."/>
            <person name="McCuddin Z."/>
            <person name="Meyer F."/>
            <person name="Moore J.L."/>
            <person name="Ocampo L.H. Jr."/>
            <person name="Paul J.H."/>
            <person name="Paulsen I.T."/>
            <person name="Reep D.K."/>
            <person name="Ren Q."/>
            <person name="Ross R.L."/>
            <person name="Sato P.Y."/>
            <person name="Thomas P."/>
            <person name="Tinkham L.E."/>
            <person name="Zeruth G.T."/>
        </authorList>
    </citation>
    <scope>NUCLEOTIDE SEQUENCE [LARGE SCALE GENOMIC DNA]</scope>
    <source>
        <strain>DSM 25203 / XCL-2</strain>
    </source>
</reference>
<reference key="2">
    <citation type="journal article" date="2008" name="PLoS ONE">
        <title>Halothiobacillus neapolitanus carboxysomes sequester heterologous and chimeric RubisCO species.</title>
        <authorList>
            <person name="Menon B.B."/>
            <person name="Dou Z."/>
            <person name="Heinhorst S."/>
            <person name="Shively J.M."/>
            <person name="Cannon G.C."/>
        </authorList>
    </citation>
    <scope>FUNCTION</scope>
    <scope>SUBCELLULAR LOCATION</scope>
    <source>
        <strain>DSM 25203 / XCL-2</strain>
    </source>
</reference>
<reference key="3">
    <citation type="journal article" date="2016" name="Arch. Microbiol.">
        <title>Dissolved inorganic carbon uptake in Thiomicrospira crunogena XCL-2 is Deltap- and ATP-sensitive and enhances RubisCO-mediated carbon fixation.</title>
        <authorList>
            <consortium name="USF MCB4404L 2012"/>
            <person name="Menning K.J."/>
            <person name="Menon B.B."/>
            <person name="Fox G."/>
            <person name="Scott K.M."/>
        </authorList>
    </citation>
    <scope>FUNCTION</scope>
    <scope>CATALYTIC ACTIVITY</scope>
    <scope>BIOPHYSICOCHEMICAL PROPERTIES</scope>
    <scope>SUBCELLULAR LOCATION</scope>
    <source>
        <strain>DSM 25203 / XCL-2</strain>
    </source>
</reference>
<reference key="4">
    <citation type="journal article" date="2017" name="J. Bacteriol.">
        <title>Proteomic and Mutant Analysis of the CO2 Concentrating Mechanism of Hydrothermal Vent Chemolithoautotroph Thiomicrospira crunogena.</title>
        <authorList>
            <consortium name="USF MCB4404L"/>
            <person name="Mangiapia M."/>
            <person name="Brown T.W."/>
            <person name="Chaput D."/>
            <person name="Haller E."/>
            <person name="Harmer T.L."/>
            <person name="Hashemy Z."/>
            <person name="Keeley R."/>
            <person name="Leonard J."/>
            <person name="Mancera P."/>
            <person name="Nicholson D."/>
            <person name="Stevens S."/>
            <person name="Wanjugi P."/>
            <person name="Zabinski T."/>
            <person name="Pan C."/>
            <person name="Scott K.M."/>
        </authorList>
    </citation>
    <scope>INDUCTION</scope>
    <source>
        <strain>DSM 25203 / XCL-2</strain>
    </source>
</reference>
<keyword id="KW-1283">Bacterial microcompartment</keyword>
<keyword id="KW-0113">Calvin cycle</keyword>
<keyword id="KW-0120">Carbon dioxide fixation</keyword>
<keyword id="KW-1282">Carboxysome</keyword>
<keyword id="KW-0456">Lyase</keyword>
<keyword id="KW-0460">Magnesium</keyword>
<keyword id="KW-0479">Metal-binding</keyword>
<keyword id="KW-0503">Monooxygenase</keyword>
<keyword id="KW-0560">Oxidoreductase</keyword>
<feature type="chain" id="PRO_0000251467" description="Ribulose bisphosphate carboxylase large chain 2">
    <location>
        <begin position="1"/>
        <end position="471"/>
    </location>
</feature>
<feature type="active site" description="Proton acceptor" evidence="2">
    <location>
        <position position="168"/>
    </location>
</feature>
<feature type="active site" description="Proton acceptor" evidence="2">
    <location>
        <position position="287"/>
    </location>
</feature>
<feature type="binding site" description="in homodimeric partner" evidence="2">
    <location>
        <position position="116"/>
    </location>
    <ligand>
        <name>substrate</name>
    </ligand>
</feature>
<feature type="binding site" evidence="2">
    <location>
        <position position="166"/>
    </location>
    <ligand>
        <name>substrate</name>
    </ligand>
</feature>
<feature type="binding site" evidence="2">
    <location>
        <position position="170"/>
    </location>
    <ligand>
        <name>substrate</name>
    </ligand>
</feature>
<feature type="binding site" description="via carbamate group" evidence="2">
    <location>
        <position position="194"/>
    </location>
    <ligand>
        <name>Mg(2+)</name>
        <dbReference type="ChEBI" id="CHEBI:18420"/>
    </ligand>
</feature>
<feature type="binding site" evidence="2">
    <location>
        <position position="196"/>
    </location>
    <ligand>
        <name>Mg(2+)</name>
        <dbReference type="ChEBI" id="CHEBI:18420"/>
    </ligand>
</feature>
<feature type="binding site" evidence="2">
    <location>
        <position position="197"/>
    </location>
    <ligand>
        <name>Mg(2+)</name>
        <dbReference type="ChEBI" id="CHEBI:18420"/>
    </ligand>
</feature>
<feature type="binding site" evidence="2">
    <location>
        <position position="288"/>
    </location>
    <ligand>
        <name>substrate</name>
    </ligand>
</feature>
<feature type="binding site" evidence="2">
    <location>
        <position position="320"/>
    </location>
    <ligand>
        <name>substrate</name>
    </ligand>
</feature>
<feature type="binding site" evidence="2">
    <location>
        <position position="372"/>
    </location>
    <ligand>
        <name>substrate</name>
    </ligand>
</feature>
<feature type="site" description="Transition state stabilizer" evidence="2">
    <location>
        <position position="327"/>
    </location>
</feature>
<feature type="modified residue" description="N6-carboxylysine" evidence="2">
    <location>
        <position position="194"/>
    </location>
</feature>
<evidence type="ECO:0000250" key="1">
    <source>
        <dbReference type="UniProtKB" id="O85040"/>
    </source>
</evidence>
<evidence type="ECO:0000255" key="2">
    <source>
        <dbReference type="HAMAP-Rule" id="MF_01338"/>
    </source>
</evidence>
<evidence type="ECO:0000269" key="3">
    <source>
    </source>
</evidence>
<evidence type="ECO:0000269" key="4">
    <source>
    </source>
</evidence>
<evidence type="ECO:0000269" key="5">
    <source>
    </source>
</evidence>
<evidence type="ECO:0000269" key="6">
    <source>
    </source>
</evidence>
<evidence type="ECO:0000303" key="7">
    <source>
    </source>
</evidence>
<evidence type="ECO:0000305" key="8"/>
<evidence type="ECO:0000305" key="9">
    <source>
    </source>
</evidence>
<evidence type="ECO:0000305" key="10">
    <source>
    </source>
</evidence>
<name>RBL1B_HYDCU</name>
<organism>
    <name type="scientific">Hydrogenovibrio crunogenus (strain DSM 25203 / XCL-2)</name>
    <name type="common">Thiomicrospira crunogena</name>
    <dbReference type="NCBI Taxonomy" id="317025"/>
    <lineage>
        <taxon>Bacteria</taxon>
        <taxon>Pseudomonadati</taxon>
        <taxon>Pseudomonadota</taxon>
        <taxon>Gammaproteobacteria</taxon>
        <taxon>Thiotrichales</taxon>
        <taxon>Piscirickettsiaceae</taxon>
        <taxon>Hydrogenovibrio</taxon>
    </lineage>
</organism>
<accession>Q31HD9</accession>
<sequence>MASKTFDAGVQDYQLTYWTPDYTPLDTDLLACFKVVPQDGVPREEAAAAVAAESSTGTWTTVWTDLLTDMEFYKGRCYRIEDVPGDKNAFYAFIAYPLDLFEEGSVVNVLTSLVGNVFGFKAVRSLRLEDLRFPIAFIKTCGGPPAGIQVERDKLNKYGRPMLGCTIKPKLGLSAKNYGRAVYECLRGGLDLTKDDENINSQPFQRWQNRFEFVADAVDKATAETGERKGHYLNVTAGTVEEMMKRAEFAKELGQPIIMHDFLTAGFTANTTLANWCRDNGMLLHIHRAMHAVIDRNPNHGIHFRVLAKCLRLSGGDHLHTGTVVGKLEGDRASTLGFVDQLREAFVPEDRSRGVFFDQDWGSMPGVMAVASGGIHVWHMPALVNIFGDDSVLQFGGGTQGHPGGNAAGAAANRVALEACVKARNEGRDLEREGGDILRDAARNSKELAVALDTWKEIKFEFDTVDKLDVG</sequence>
<gene>
    <name evidence="2" type="primary">cbbL2</name>
    <name type="ordered locus">Tcr_0838</name>
</gene>
<proteinExistence type="evidence at protein level"/>
<comment type="function">
    <text evidence="2 4">RuBisCO catalyzes two reactions: the carboxylation of D-ribulose 1,5-bisphosphate, the primary event in carbon dioxide fixation, as well as the oxidative fragmentation of the pentose substrate. Both reactions occur simultaneously and in competition at the same active site (By similarity). Replacing the endogenous type I ccbLS genes in H.neapolitanus with this carboxysomally targeted enzyme reconstitutes RuBisCO with about 25% of normal activity; the active enzyme is targeted to carboxysomes (PubMed:18974784).</text>
</comment>
<comment type="catalytic activity">
    <reaction evidence="2 5">
        <text>2 (2R)-3-phosphoglycerate + 2 H(+) = D-ribulose 1,5-bisphosphate + CO2 + H2O</text>
        <dbReference type="Rhea" id="RHEA:23124"/>
        <dbReference type="ChEBI" id="CHEBI:15377"/>
        <dbReference type="ChEBI" id="CHEBI:15378"/>
        <dbReference type="ChEBI" id="CHEBI:16526"/>
        <dbReference type="ChEBI" id="CHEBI:57870"/>
        <dbReference type="ChEBI" id="CHEBI:58272"/>
        <dbReference type="EC" id="4.1.1.39"/>
    </reaction>
</comment>
<comment type="catalytic activity">
    <reaction evidence="2">
        <text>D-ribulose 1,5-bisphosphate + O2 = 2-phosphoglycolate + (2R)-3-phosphoglycerate + 2 H(+)</text>
        <dbReference type="Rhea" id="RHEA:36631"/>
        <dbReference type="ChEBI" id="CHEBI:15378"/>
        <dbReference type="ChEBI" id="CHEBI:15379"/>
        <dbReference type="ChEBI" id="CHEBI:57870"/>
        <dbReference type="ChEBI" id="CHEBI:58033"/>
        <dbReference type="ChEBI" id="CHEBI:58272"/>
    </reaction>
</comment>
<comment type="cofactor">
    <cofactor evidence="2">
        <name>Mg(2+)</name>
        <dbReference type="ChEBI" id="CHEBI:18420"/>
    </cofactor>
    <text evidence="2">Binds 1 Mg(2+) ion per subunit.</text>
</comment>
<comment type="biophysicochemical properties">
    <kinetics>
        <KM evidence="5">276 uM for CO(2)</KM>
        <Vmax evidence="5">252.0 nmol/min/mg enzyme</Vmax>
        <text evidence="5">kcat is 0.27 sec(-1) for holoenzyme.</text>
    </kinetics>
    <phDependence>
        <text evidence="5">Optimum pH is 8.0.</text>
    </phDependence>
</comment>
<comment type="subunit">
    <text evidence="1 2">Heterohexadecamer of 8 large chains and 8 small chains. Forms a CsoS2-CsoS1-RuBisCO complex (By similarity).</text>
</comment>
<comment type="subcellular location">
    <subcellularLocation>
        <location evidence="5 9 10">Carboxysome</location>
    </subcellularLocation>
    <text evidence="8">This bacterium makes alpha-type carboxysomes.</text>
</comment>
<comment type="induction">
    <text evidence="6">Induced by growth in low levels of dissolved inorganic carbon (at protein level).</text>
</comment>
<comment type="miscellaneous">
    <text evidence="3">Encoded in a cso-type operon.</text>
</comment>
<comment type="miscellaneous">
    <text evidence="2">The basic functional RuBisCO is composed of a large chain homodimer in a 'head-to-tail' conformation. In form I RuBisCO this homodimer is arranged in a barrel-like tetramer with the small subunits forming a tetrameric 'cap' on each end of the 'barrel'.</text>
</comment>
<comment type="similarity">
    <text evidence="2">Belongs to the RuBisCO large chain family. Type I subfamily.</text>
</comment>